<comment type="function">
    <text>Required for vesicular transport between the endoplasmic reticulum and the Golgi apparatus.</text>
</comment>
<comment type="subunit">
    <text evidence="2 4">Interacts with RAB11FIP5 (PubMed:11278501). Interacts with VTI1A (By similarity).</text>
</comment>
<comment type="subcellular location">
    <subcellularLocation>
        <location evidence="1">Membrane</location>
        <topology evidence="1">Peripheral membrane protein</topology>
    </subcellularLocation>
    <subcellularLocation>
        <location evidence="2">Golgi apparatus</location>
    </subcellularLocation>
</comment>
<comment type="alternative products">
    <event type="alternative splicing"/>
    <isoform>
        <id>Q99747-1</id>
        <name>1</name>
        <sequence type="displayed"/>
    </isoform>
    <isoform>
        <id>Q99747-2</id>
        <name>2</name>
        <sequence type="described" ref="VSP_056355"/>
    </isoform>
</comment>
<comment type="similarity">
    <text evidence="7">Belongs to the SNAP family.</text>
</comment>
<name>SNAG_HUMAN</name>
<accession>Q99747</accession>
<accession>B4DFC9</accession>
<accession>Q9BUV1</accession>
<reference key="1">
    <citation type="journal article" date="1997" name="Blood">
        <title>Regulated secretion in platelets: identification of elements of the platelet exocytosis machinery.</title>
        <authorList>
            <person name="Lemons P.P."/>
            <person name="Chen D."/>
            <person name="Bernstein A.M."/>
            <person name="Bennett M.K."/>
            <person name="Whiteheart S.W."/>
        </authorList>
    </citation>
    <scope>NUCLEOTIDE SEQUENCE [MRNA] (ISOFORM 1)</scope>
</reference>
<reference key="2">
    <citation type="journal article" date="2004" name="Nat. Genet.">
        <title>Complete sequencing and characterization of 21,243 full-length human cDNAs.</title>
        <authorList>
            <person name="Ota T."/>
            <person name="Suzuki Y."/>
            <person name="Nishikawa T."/>
            <person name="Otsuki T."/>
            <person name="Sugiyama T."/>
            <person name="Irie R."/>
            <person name="Wakamatsu A."/>
            <person name="Hayashi K."/>
            <person name="Sato H."/>
            <person name="Nagai K."/>
            <person name="Kimura K."/>
            <person name="Makita H."/>
            <person name="Sekine M."/>
            <person name="Obayashi M."/>
            <person name="Nishi T."/>
            <person name="Shibahara T."/>
            <person name="Tanaka T."/>
            <person name="Ishii S."/>
            <person name="Yamamoto J."/>
            <person name="Saito K."/>
            <person name="Kawai Y."/>
            <person name="Isono Y."/>
            <person name="Nakamura Y."/>
            <person name="Nagahari K."/>
            <person name="Murakami K."/>
            <person name="Yasuda T."/>
            <person name="Iwayanagi T."/>
            <person name="Wagatsuma M."/>
            <person name="Shiratori A."/>
            <person name="Sudo H."/>
            <person name="Hosoiri T."/>
            <person name="Kaku Y."/>
            <person name="Kodaira H."/>
            <person name="Kondo H."/>
            <person name="Sugawara M."/>
            <person name="Takahashi M."/>
            <person name="Kanda K."/>
            <person name="Yokoi T."/>
            <person name="Furuya T."/>
            <person name="Kikkawa E."/>
            <person name="Omura Y."/>
            <person name="Abe K."/>
            <person name="Kamihara K."/>
            <person name="Katsuta N."/>
            <person name="Sato K."/>
            <person name="Tanikawa M."/>
            <person name="Yamazaki M."/>
            <person name="Ninomiya K."/>
            <person name="Ishibashi T."/>
            <person name="Yamashita H."/>
            <person name="Murakawa K."/>
            <person name="Fujimori K."/>
            <person name="Tanai H."/>
            <person name="Kimata M."/>
            <person name="Watanabe M."/>
            <person name="Hiraoka S."/>
            <person name="Chiba Y."/>
            <person name="Ishida S."/>
            <person name="Ono Y."/>
            <person name="Takiguchi S."/>
            <person name="Watanabe S."/>
            <person name="Yosida M."/>
            <person name="Hotuta T."/>
            <person name="Kusano J."/>
            <person name="Kanehori K."/>
            <person name="Takahashi-Fujii A."/>
            <person name="Hara H."/>
            <person name="Tanase T.-O."/>
            <person name="Nomura Y."/>
            <person name="Togiya S."/>
            <person name="Komai F."/>
            <person name="Hara R."/>
            <person name="Takeuchi K."/>
            <person name="Arita M."/>
            <person name="Imose N."/>
            <person name="Musashino K."/>
            <person name="Yuuki H."/>
            <person name="Oshima A."/>
            <person name="Sasaki N."/>
            <person name="Aotsuka S."/>
            <person name="Yoshikawa Y."/>
            <person name="Matsunawa H."/>
            <person name="Ichihara T."/>
            <person name="Shiohata N."/>
            <person name="Sano S."/>
            <person name="Moriya S."/>
            <person name="Momiyama H."/>
            <person name="Satoh N."/>
            <person name="Takami S."/>
            <person name="Terashima Y."/>
            <person name="Suzuki O."/>
            <person name="Nakagawa S."/>
            <person name="Senoh A."/>
            <person name="Mizoguchi H."/>
            <person name="Goto Y."/>
            <person name="Shimizu F."/>
            <person name="Wakebe H."/>
            <person name="Hishigaki H."/>
            <person name="Watanabe T."/>
            <person name="Sugiyama A."/>
            <person name="Takemoto M."/>
            <person name="Kawakami B."/>
            <person name="Yamazaki M."/>
            <person name="Watanabe K."/>
            <person name="Kumagai A."/>
            <person name="Itakura S."/>
            <person name="Fukuzumi Y."/>
            <person name="Fujimori Y."/>
            <person name="Komiyama M."/>
            <person name="Tashiro H."/>
            <person name="Tanigami A."/>
            <person name="Fujiwara T."/>
            <person name="Ono T."/>
            <person name="Yamada K."/>
            <person name="Fujii Y."/>
            <person name="Ozaki K."/>
            <person name="Hirao M."/>
            <person name="Ohmori Y."/>
            <person name="Kawabata A."/>
            <person name="Hikiji T."/>
            <person name="Kobatake N."/>
            <person name="Inagaki H."/>
            <person name="Ikema Y."/>
            <person name="Okamoto S."/>
            <person name="Okitani R."/>
            <person name="Kawakami T."/>
            <person name="Noguchi S."/>
            <person name="Itoh T."/>
            <person name="Shigeta K."/>
            <person name="Senba T."/>
            <person name="Matsumura K."/>
            <person name="Nakajima Y."/>
            <person name="Mizuno T."/>
            <person name="Morinaga M."/>
            <person name="Sasaki M."/>
            <person name="Togashi T."/>
            <person name="Oyama M."/>
            <person name="Hata H."/>
            <person name="Watanabe M."/>
            <person name="Komatsu T."/>
            <person name="Mizushima-Sugano J."/>
            <person name="Satoh T."/>
            <person name="Shirai Y."/>
            <person name="Takahashi Y."/>
            <person name="Nakagawa K."/>
            <person name="Okumura K."/>
            <person name="Nagase T."/>
            <person name="Nomura N."/>
            <person name="Kikuchi H."/>
            <person name="Masuho Y."/>
            <person name="Yamashita R."/>
            <person name="Nakai K."/>
            <person name="Yada T."/>
            <person name="Nakamura Y."/>
            <person name="Ohara O."/>
            <person name="Isogai T."/>
            <person name="Sugano S."/>
        </authorList>
    </citation>
    <scope>NUCLEOTIDE SEQUENCE [LARGE SCALE MRNA] (ISOFORM 2)</scope>
    <source>
        <tissue>Cerebellum</tissue>
    </source>
</reference>
<reference key="3">
    <citation type="journal article" date="2005" name="Nature">
        <title>DNA sequence and analysis of human chromosome 18.</title>
        <authorList>
            <person name="Nusbaum C."/>
            <person name="Zody M.C."/>
            <person name="Borowsky M.L."/>
            <person name="Kamal M."/>
            <person name="Kodira C.D."/>
            <person name="Taylor T.D."/>
            <person name="Whittaker C.A."/>
            <person name="Chang J.L."/>
            <person name="Cuomo C.A."/>
            <person name="Dewar K."/>
            <person name="FitzGerald M.G."/>
            <person name="Yang X."/>
            <person name="Abouelleil A."/>
            <person name="Allen N.R."/>
            <person name="Anderson S."/>
            <person name="Bloom T."/>
            <person name="Bugalter B."/>
            <person name="Butler J."/>
            <person name="Cook A."/>
            <person name="DeCaprio D."/>
            <person name="Engels R."/>
            <person name="Garber M."/>
            <person name="Gnirke A."/>
            <person name="Hafez N."/>
            <person name="Hall J.L."/>
            <person name="Norman C.H."/>
            <person name="Itoh T."/>
            <person name="Jaffe D.B."/>
            <person name="Kuroki Y."/>
            <person name="Lehoczky J."/>
            <person name="Lui A."/>
            <person name="Macdonald P."/>
            <person name="Mauceli E."/>
            <person name="Mikkelsen T.S."/>
            <person name="Naylor J.W."/>
            <person name="Nicol R."/>
            <person name="Nguyen C."/>
            <person name="Noguchi H."/>
            <person name="O'Leary S.B."/>
            <person name="Piqani B."/>
            <person name="Smith C.L."/>
            <person name="Talamas J.A."/>
            <person name="Topham K."/>
            <person name="Totoki Y."/>
            <person name="Toyoda A."/>
            <person name="Wain H.M."/>
            <person name="Young S.K."/>
            <person name="Zeng Q."/>
            <person name="Zimmer A.R."/>
            <person name="Fujiyama A."/>
            <person name="Hattori M."/>
            <person name="Birren B.W."/>
            <person name="Sakaki Y."/>
            <person name="Lander E.S."/>
        </authorList>
    </citation>
    <scope>NUCLEOTIDE SEQUENCE [LARGE SCALE GENOMIC DNA]</scope>
</reference>
<reference key="4">
    <citation type="journal article" date="2004" name="Genome Res.">
        <title>The status, quality, and expansion of the NIH full-length cDNA project: the Mammalian Gene Collection (MGC).</title>
        <authorList>
            <consortium name="The MGC Project Team"/>
        </authorList>
    </citation>
    <scope>NUCLEOTIDE SEQUENCE [LARGE SCALE MRNA] (ISOFORM 1)</scope>
    <source>
        <tissue>Lung</tissue>
    </source>
</reference>
<reference key="5">
    <citation type="journal article" date="2001" name="J. Biol. Chem.">
        <title>Gaf-1, a gamma-SNAP-binding protein associated with the mitochondria.</title>
        <authorList>
            <person name="Chen D."/>
            <person name="Xu W."/>
            <person name="He P."/>
            <person name="Medrano E.E."/>
            <person name="Whiteheart S.W."/>
        </authorList>
    </citation>
    <scope>INTERACTION WITH RAB11FIP5</scope>
</reference>
<reference key="6">
    <citation type="journal article" date="2005" name="Nat. Biotechnol.">
        <title>Immunoaffinity profiling of tyrosine phosphorylation in cancer cells.</title>
        <authorList>
            <person name="Rush J."/>
            <person name="Moritz A."/>
            <person name="Lee K.A."/>
            <person name="Guo A."/>
            <person name="Goss V.L."/>
            <person name="Spek E.J."/>
            <person name="Zhang H."/>
            <person name="Zha X.-M."/>
            <person name="Polakiewicz R.D."/>
            <person name="Comb M.J."/>
        </authorList>
    </citation>
    <scope>IDENTIFICATION BY MASS SPECTROMETRY [LARGE SCALE ANALYSIS]</scope>
</reference>
<reference key="7">
    <citation type="journal article" date="2008" name="Proc. Natl. Acad. Sci. U.S.A.">
        <title>A quantitative atlas of mitotic phosphorylation.</title>
        <authorList>
            <person name="Dephoure N."/>
            <person name="Zhou C."/>
            <person name="Villen J."/>
            <person name="Beausoleil S.A."/>
            <person name="Bakalarski C.E."/>
            <person name="Elledge S.J."/>
            <person name="Gygi S.P."/>
        </authorList>
    </citation>
    <scope>IDENTIFICATION BY MASS SPECTROMETRY [LARGE SCALE ANALYSIS]</scope>
    <source>
        <tissue>Cervix carcinoma</tissue>
    </source>
</reference>
<reference key="8">
    <citation type="journal article" date="2011" name="BMC Syst. Biol.">
        <title>Initial characterization of the human central proteome.</title>
        <authorList>
            <person name="Burkard T.R."/>
            <person name="Planyavsky M."/>
            <person name="Kaupe I."/>
            <person name="Breitwieser F.P."/>
            <person name="Buerckstuemmer T."/>
            <person name="Bennett K.L."/>
            <person name="Superti-Furga G."/>
            <person name="Colinge J."/>
        </authorList>
    </citation>
    <scope>IDENTIFICATION BY MASS SPECTROMETRY [LARGE SCALE ANALYSIS]</scope>
</reference>
<reference key="9">
    <citation type="journal article" date="2014" name="J. Proteomics">
        <title>An enzyme assisted RP-RPLC approach for in-depth analysis of human liver phosphoproteome.</title>
        <authorList>
            <person name="Bian Y."/>
            <person name="Song C."/>
            <person name="Cheng K."/>
            <person name="Dong M."/>
            <person name="Wang F."/>
            <person name="Huang J."/>
            <person name="Sun D."/>
            <person name="Wang L."/>
            <person name="Ye M."/>
            <person name="Zou H."/>
        </authorList>
    </citation>
    <scope>IDENTIFICATION BY MASS SPECTROMETRY [LARGE SCALE ANALYSIS]</scope>
    <source>
        <tissue>Liver</tissue>
    </source>
</reference>
<reference key="10">
    <citation type="journal article" date="2015" name="Proteomics">
        <title>N-terminome analysis of the human mitochondrial proteome.</title>
        <authorList>
            <person name="Vaca Jacome A.S."/>
            <person name="Rabilloud T."/>
            <person name="Schaeffer-Reiss C."/>
            <person name="Rompais M."/>
            <person name="Ayoub D."/>
            <person name="Lane L."/>
            <person name="Bairoch A."/>
            <person name="Van Dorsselaer A."/>
            <person name="Carapito C."/>
        </authorList>
    </citation>
    <scope>IDENTIFICATION BY MASS SPECTROMETRY [LARGE SCALE ANALYSIS]</scope>
</reference>
<evidence type="ECO:0000250" key="1">
    <source>
        <dbReference type="UniProtKB" id="P81127"/>
    </source>
</evidence>
<evidence type="ECO:0000250" key="2">
    <source>
        <dbReference type="UniProtKB" id="Q9CWZ7"/>
    </source>
</evidence>
<evidence type="ECO:0000256" key="3">
    <source>
        <dbReference type="SAM" id="MobiDB-lite"/>
    </source>
</evidence>
<evidence type="ECO:0000269" key="4">
    <source>
    </source>
</evidence>
<evidence type="ECO:0000303" key="5">
    <source>
    </source>
</evidence>
<evidence type="ECO:0000303" key="6">
    <source>
    </source>
</evidence>
<evidence type="ECO:0000305" key="7"/>
<evidence type="ECO:0000312" key="8">
    <source>
        <dbReference type="HGNC" id="HGNC:7642"/>
    </source>
</evidence>
<dbReference type="EMBL" id="U78107">
    <property type="protein sequence ID" value="AAB69753.1"/>
    <property type="molecule type" value="mRNA"/>
</dbReference>
<dbReference type="EMBL" id="AK294038">
    <property type="protein sequence ID" value="BAG57390.1"/>
    <property type="molecule type" value="mRNA"/>
</dbReference>
<dbReference type="EMBL" id="AP001099">
    <property type="status" value="NOT_ANNOTATED_CDS"/>
    <property type="molecule type" value="Genomic_DNA"/>
</dbReference>
<dbReference type="EMBL" id="BC001889">
    <property type="protein sequence ID" value="AAH01889.1"/>
    <property type="molecule type" value="mRNA"/>
</dbReference>
<dbReference type="CCDS" id="CCDS45827.1">
    <molecule id="Q99747-1"/>
</dbReference>
<dbReference type="RefSeq" id="NP_003817.1">
    <molecule id="Q99747-1"/>
    <property type="nucleotide sequence ID" value="NM_003826.3"/>
</dbReference>
<dbReference type="RefSeq" id="XP_011524058.1">
    <molecule id="Q99747-2"/>
    <property type="nucleotide sequence ID" value="XM_011525756.3"/>
</dbReference>
<dbReference type="RefSeq" id="XP_054175286.1">
    <molecule id="Q99747-2"/>
    <property type="nucleotide sequence ID" value="XM_054319311.1"/>
</dbReference>
<dbReference type="SMR" id="Q99747"/>
<dbReference type="BioGRID" id="114304">
    <property type="interactions" value="92"/>
</dbReference>
<dbReference type="FunCoup" id="Q99747">
    <property type="interactions" value="1829"/>
</dbReference>
<dbReference type="IntAct" id="Q99747">
    <property type="interactions" value="72"/>
</dbReference>
<dbReference type="MINT" id="Q99747"/>
<dbReference type="STRING" id="9606.ENSP00000324628"/>
<dbReference type="GlyGen" id="Q99747">
    <property type="glycosylation" value="1 site, 1 O-linked glycan (1 site)"/>
</dbReference>
<dbReference type="iPTMnet" id="Q99747"/>
<dbReference type="PhosphoSitePlus" id="Q99747"/>
<dbReference type="SwissPalm" id="Q99747"/>
<dbReference type="BioMuta" id="NAPG"/>
<dbReference type="DMDM" id="3024632"/>
<dbReference type="OGP" id="Q99747"/>
<dbReference type="jPOST" id="Q99747"/>
<dbReference type="MassIVE" id="Q99747"/>
<dbReference type="PaxDb" id="9606-ENSP00000324628"/>
<dbReference type="PeptideAtlas" id="Q99747"/>
<dbReference type="ProteomicsDB" id="4024"/>
<dbReference type="ProteomicsDB" id="78455">
    <molecule id="Q99747-1"/>
</dbReference>
<dbReference type="Pumba" id="Q99747"/>
<dbReference type="Antibodypedia" id="2189">
    <property type="antibodies" value="179 antibodies from 28 providers"/>
</dbReference>
<dbReference type="DNASU" id="8774"/>
<dbReference type="Ensembl" id="ENST00000322897.11">
    <molecule id="Q99747-1"/>
    <property type="protein sequence ID" value="ENSP00000324628.6"/>
    <property type="gene ID" value="ENSG00000134265.13"/>
</dbReference>
<dbReference type="GeneID" id="8774"/>
<dbReference type="KEGG" id="hsa:8774"/>
<dbReference type="MANE-Select" id="ENST00000322897.11">
    <property type="protein sequence ID" value="ENSP00000324628.6"/>
    <property type="RefSeq nucleotide sequence ID" value="NM_003826.3"/>
    <property type="RefSeq protein sequence ID" value="NP_003817.1"/>
</dbReference>
<dbReference type="UCSC" id="uc002kon.4">
    <molecule id="Q99747-1"/>
    <property type="organism name" value="human"/>
</dbReference>
<dbReference type="AGR" id="HGNC:7642"/>
<dbReference type="CTD" id="8774"/>
<dbReference type="DisGeNET" id="8774"/>
<dbReference type="GeneCards" id="NAPG"/>
<dbReference type="HGNC" id="HGNC:7642">
    <property type="gene designation" value="NAPG"/>
</dbReference>
<dbReference type="HPA" id="ENSG00000134265">
    <property type="expression patterns" value="Low tissue specificity"/>
</dbReference>
<dbReference type="MIM" id="603216">
    <property type="type" value="gene"/>
</dbReference>
<dbReference type="neXtProt" id="NX_Q99747"/>
<dbReference type="OpenTargets" id="ENSG00000134265"/>
<dbReference type="PharmGKB" id="PA31445"/>
<dbReference type="VEuPathDB" id="HostDB:ENSG00000134265"/>
<dbReference type="eggNOG" id="KOG1585">
    <property type="taxonomic scope" value="Eukaryota"/>
</dbReference>
<dbReference type="GeneTree" id="ENSGT00390000005826"/>
<dbReference type="HOGENOM" id="CLU_063974_1_0_1"/>
<dbReference type="InParanoid" id="Q99747"/>
<dbReference type="OMA" id="RSWFHAA"/>
<dbReference type="OrthoDB" id="26569at2759"/>
<dbReference type="PAN-GO" id="Q99747">
    <property type="GO annotations" value="4 GO annotations based on evolutionary models"/>
</dbReference>
<dbReference type="PhylomeDB" id="Q99747"/>
<dbReference type="TreeFam" id="TF312872"/>
<dbReference type="PathwayCommons" id="Q99747"/>
<dbReference type="Reactome" id="R-HSA-204005">
    <property type="pathway name" value="COPII-mediated vesicle transport"/>
</dbReference>
<dbReference type="Reactome" id="R-HSA-6807878">
    <property type="pathway name" value="COPI-mediated anterograde transport"/>
</dbReference>
<dbReference type="Reactome" id="R-HSA-6811434">
    <property type="pathway name" value="COPI-dependent Golgi-to-ER retrograde traffic"/>
</dbReference>
<dbReference type="Reactome" id="R-HSA-6811438">
    <property type="pathway name" value="Intra-Golgi traffic"/>
</dbReference>
<dbReference type="Reactome" id="R-HSA-6811440">
    <property type="pathway name" value="Retrograde transport at the Trans-Golgi-Network"/>
</dbReference>
<dbReference type="SignaLink" id="Q99747"/>
<dbReference type="BioGRID-ORCS" id="8774">
    <property type="hits" value="522 hits in 1158 CRISPR screens"/>
</dbReference>
<dbReference type="CD-CODE" id="FB4E32DD">
    <property type="entry name" value="Presynaptic clusters and postsynaptic densities"/>
</dbReference>
<dbReference type="ChiTaRS" id="NAPG">
    <property type="organism name" value="human"/>
</dbReference>
<dbReference type="GeneWiki" id="NAPG"/>
<dbReference type="GenomeRNAi" id="8774"/>
<dbReference type="Pharos" id="Q99747">
    <property type="development level" value="Tbio"/>
</dbReference>
<dbReference type="PRO" id="PR:Q99747"/>
<dbReference type="Proteomes" id="UP000005640">
    <property type="component" value="Chromosome 18"/>
</dbReference>
<dbReference type="RNAct" id="Q99747">
    <property type="molecule type" value="protein"/>
</dbReference>
<dbReference type="Bgee" id="ENSG00000134265">
    <property type="expression patterns" value="Expressed in endothelial cell and 193 other cell types or tissues"/>
</dbReference>
<dbReference type="ExpressionAtlas" id="Q99747">
    <property type="expression patterns" value="baseline and differential"/>
</dbReference>
<dbReference type="GO" id="GO:0070062">
    <property type="term" value="C:extracellular exosome"/>
    <property type="evidence" value="ECO:0007005"/>
    <property type="project" value="UniProtKB"/>
</dbReference>
<dbReference type="GO" id="GO:0005794">
    <property type="term" value="C:Golgi apparatus"/>
    <property type="evidence" value="ECO:0007669"/>
    <property type="project" value="UniProtKB-SubCell"/>
</dbReference>
<dbReference type="GO" id="GO:0005765">
    <property type="term" value="C:lysosomal membrane"/>
    <property type="evidence" value="ECO:0007005"/>
    <property type="project" value="UniProtKB"/>
</dbReference>
<dbReference type="GO" id="GO:0005739">
    <property type="term" value="C:mitochondrion"/>
    <property type="evidence" value="ECO:0000314"/>
    <property type="project" value="UniProtKB"/>
</dbReference>
<dbReference type="GO" id="GO:0031201">
    <property type="term" value="C:SNARE complex"/>
    <property type="evidence" value="ECO:0000318"/>
    <property type="project" value="GO_Central"/>
</dbReference>
<dbReference type="GO" id="GO:0005483">
    <property type="term" value="F:soluble NSF attachment protein activity"/>
    <property type="evidence" value="ECO:0000318"/>
    <property type="project" value="GO_Central"/>
</dbReference>
<dbReference type="GO" id="GO:0019905">
    <property type="term" value="F:syntaxin binding"/>
    <property type="evidence" value="ECO:0000318"/>
    <property type="project" value="GO_Central"/>
</dbReference>
<dbReference type="GO" id="GO:0006891">
    <property type="term" value="P:intra-Golgi vesicle-mediated transport"/>
    <property type="evidence" value="ECO:0000304"/>
    <property type="project" value="ProtInc"/>
</dbReference>
<dbReference type="GO" id="GO:0006886">
    <property type="term" value="P:intracellular protein transport"/>
    <property type="evidence" value="ECO:0000318"/>
    <property type="project" value="GO_Central"/>
</dbReference>
<dbReference type="GO" id="GO:0061025">
    <property type="term" value="P:membrane fusion"/>
    <property type="evidence" value="ECO:0000304"/>
    <property type="project" value="ProtInc"/>
</dbReference>
<dbReference type="GO" id="GO:0050821">
    <property type="term" value="P:protein stabilization"/>
    <property type="evidence" value="ECO:0000303"/>
    <property type="project" value="UniProtKB"/>
</dbReference>
<dbReference type="GO" id="GO:0065003">
    <property type="term" value="P:protein-containing complex assembly"/>
    <property type="evidence" value="ECO:0000303"/>
    <property type="project" value="UniProtKB"/>
</dbReference>
<dbReference type="CDD" id="cd15832">
    <property type="entry name" value="SNAP"/>
    <property type="match status" value="1"/>
</dbReference>
<dbReference type="FunFam" id="1.25.40.10:FF:000115">
    <property type="entry name" value="Gamma-soluble NSF attachment protein"/>
    <property type="match status" value="1"/>
</dbReference>
<dbReference type="Gene3D" id="1.25.40.10">
    <property type="entry name" value="Tetratricopeptide repeat domain"/>
    <property type="match status" value="1"/>
</dbReference>
<dbReference type="InterPro" id="IPR000744">
    <property type="entry name" value="NSF_attach"/>
</dbReference>
<dbReference type="InterPro" id="IPR011990">
    <property type="entry name" value="TPR-like_helical_dom_sf"/>
</dbReference>
<dbReference type="PANTHER" id="PTHR13768:SF2">
    <property type="entry name" value="GAMMA-SOLUBLE NSF ATTACHMENT PROTEIN"/>
    <property type="match status" value="1"/>
</dbReference>
<dbReference type="PANTHER" id="PTHR13768">
    <property type="entry name" value="SOLUBLE NSF ATTACHMENT PROTEIN SNAP"/>
    <property type="match status" value="1"/>
</dbReference>
<dbReference type="Pfam" id="PF14938">
    <property type="entry name" value="SNAP"/>
    <property type="match status" value="1"/>
</dbReference>
<dbReference type="SUPFAM" id="SSF48452">
    <property type="entry name" value="TPR-like"/>
    <property type="match status" value="1"/>
</dbReference>
<keyword id="KW-0025">Alternative splicing</keyword>
<keyword id="KW-0931">ER-Golgi transport</keyword>
<keyword id="KW-0333">Golgi apparatus</keyword>
<keyword id="KW-0472">Membrane</keyword>
<keyword id="KW-0597">Phosphoprotein</keyword>
<keyword id="KW-0653">Protein transport</keyword>
<keyword id="KW-1267">Proteomics identification</keyword>
<keyword id="KW-1185">Reference proteome</keyword>
<keyword id="KW-0813">Transport</keyword>
<organism>
    <name type="scientific">Homo sapiens</name>
    <name type="common">Human</name>
    <dbReference type="NCBI Taxonomy" id="9606"/>
    <lineage>
        <taxon>Eukaryota</taxon>
        <taxon>Metazoa</taxon>
        <taxon>Chordata</taxon>
        <taxon>Craniata</taxon>
        <taxon>Vertebrata</taxon>
        <taxon>Euteleostomi</taxon>
        <taxon>Mammalia</taxon>
        <taxon>Eutheria</taxon>
        <taxon>Euarchontoglires</taxon>
        <taxon>Primates</taxon>
        <taxon>Haplorrhini</taxon>
        <taxon>Catarrhini</taxon>
        <taxon>Hominidae</taxon>
        <taxon>Homo</taxon>
    </lineage>
</organism>
<protein>
    <recommendedName>
        <fullName evidence="5">Gamma-soluble NSF attachment protein</fullName>
        <shortName evidence="5">SNAP-gamma</shortName>
    </recommendedName>
    <alternativeName>
        <fullName evidence="8">N-ethylmaleimide-sensitive factor attachment protein gamma</fullName>
    </alternativeName>
</protein>
<feature type="chain" id="PRO_0000219063" description="Gamma-soluble NSF attachment protein">
    <location>
        <begin position="1"/>
        <end position="312"/>
    </location>
</feature>
<feature type="region of interest" description="Disordered" evidence="3">
    <location>
        <begin position="281"/>
        <end position="312"/>
    </location>
</feature>
<feature type="compositionally biased region" description="Acidic residues" evidence="3">
    <location>
        <begin position="300"/>
        <end position="312"/>
    </location>
</feature>
<feature type="modified residue" description="Phosphoserine" evidence="2">
    <location>
        <position position="284"/>
    </location>
</feature>
<feature type="modified residue" description="Phosphothreonine" evidence="2">
    <location>
        <position position="287"/>
    </location>
</feature>
<feature type="modified residue" description="Phosphoserine" evidence="2">
    <location>
        <position position="308"/>
    </location>
</feature>
<feature type="splice variant" id="VSP_056355" description="In isoform 2." evidence="6">
    <location>
        <begin position="1"/>
        <end position="82"/>
    </location>
</feature>
<feature type="sequence variant" id="VAR_052027" description="In dbSNP:rs2228300.">
    <original>P</original>
    <variation>S</variation>
    <location>
        <position position="92"/>
    </location>
</feature>
<feature type="sequence variant" id="VAR_020129" description="In dbSNP:rs2305370.">
    <original>K</original>
    <variation>N</variation>
    <location>
        <position position="281"/>
    </location>
</feature>
<feature type="sequence conflict" description="In Ref. 4; AAH01889." evidence="7" ref="4">
    <original>E</original>
    <variation>D</variation>
    <location>
        <position position="147"/>
    </location>
</feature>
<gene>
    <name evidence="8" type="primary">NAPG</name>
    <name evidence="2" type="synonym">SNAPG</name>
</gene>
<proteinExistence type="evidence at protein level"/>
<sequence>MAAQKINEGLEHLAKAEKYLKTGFLKWKPDYDSAASEYGKAAVAFKNAKQFEQAKDACLREAVAHENNRALFHAAKAYEQAGMMLKEMQKLPEAVQLIEKASMMYLENGTPDTAAMALERAGKLIENVDPEKAVQLYQQTANVFENEERLRQAVELLGKASRLLVRGRRFDEAALSIQKEKNIYKEIENYPTCYKKTIAQVLVHLHRNDYVAAERCVRESYSIPGFNGSEDCAALEQLLEGYDQQDQDQVSDVCNSPLFKYMDNDYAKLGLSLVVPGGGIKKKSPATPQAKPDGVTATAADEEEDEYSGGLC</sequence>